<reference key="1">
    <citation type="journal article" date="1996" name="Science">
        <title>Complete genome sequence of the methanogenic archaeon, Methanococcus jannaschii.</title>
        <authorList>
            <person name="Bult C.J."/>
            <person name="White O."/>
            <person name="Olsen G.J."/>
            <person name="Zhou L."/>
            <person name="Fleischmann R.D."/>
            <person name="Sutton G.G."/>
            <person name="Blake J.A."/>
            <person name="FitzGerald L.M."/>
            <person name="Clayton R.A."/>
            <person name="Gocayne J.D."/>
            <person name="Kerlavage A.R."/>
            <person name="Dougherty B.A."/>
            <person name="Tomb J.-F."/>
            <person name="Adams M.D."/>
            <person name="Reich C.I."/>
            <person name="Overbeek R."/>
            <person name="Kirkness E.F."/>
            <person name="Weinstock K.G."/>
            <person name="Merrick J.M."/>
            <person name="Glodek A."/>
            <person name="Scott J.L."/>
            <person name="Geoghagen N.S.M."/>
            <person name="Weidman J.F."/>
            <person name="Fuhrmann J.L."/>
            <person name="Nguyen D."/>
            <person name="Utterback T.R."/>
            <person name="Kelley J.M."/>
            <person name="Peterson J.D."/>
            <person name="Sadow P.W."/>
            <person name="Hanna M.C."/>
            <person name="Cotton M.D."/>
            <person name="Roberts K.M."/>
            <person name="Hurst M.A."/>
            <person name="Kaine B.P."/>
            <person name="Borodovsky M."/>
            <person name="Klenk H.-P."/>
            <person name="Fraser C.M."/>
            <person name="Smith H.O."/>
            <person name="Woese C.R."/>
            <person name="Venter J.C."/>
        </authorList>
    </citation>
    <scope>NUCLEOTIDE SEQUENCE [LARGE SCALE GENOMIC DNA]</scope>
    <source>
        <strain>ATCC 43067 / DSM 2661 / JAL-1 / JCM 10045 / NBRC 100440</strain>
    </source>
</reference>
<name>Y34A_METJA</name>
<proteinExistence type="predicted"/>
<dbReference type="EMBL" id="L77117">
    <property type="protein sequence ID" value="AAB98344.1"/>
    <property type="molecule type" value="Genomic_DNA"/>
</dbReference>
<dbReference type="RefSeq" id="WP_010869846.1">
    <property type="nucleotide sequence ID" value="NC_000909.1"/>
</dbReference>
<dbReference type="STRING" id="243232.MJ_0347.1"/>
<dbReference type="PaxDb" id="243232-MJ_0347.1"/>
<dbReference type="EnsemblBacteria" id="AAB98344">
    <property type="protein sequence ID" value="AAB98344"/>
    <property type="gene ID" value="MJ_0347.1"/>
</dbReference>
<dbReference type="GeneID" id="1451204"/>
<dbReference type="KEGG" id="mja:MJ_0347.1"/>
<dbReference type="eggNOG" id="arCOG09650">
    <property type="taxonomic scope" value="Archaea"/>
</dbReference>
<dbReference type="HOGENOM" id="CLU_1465090_0_0_2"/>
<dbReference type="InParanoid" id="P81307"/>
<dbReference type="OrthoDB" id="375147at2157"/>
<dbReference type="Proteomes" id="UP000000805">
    <property type="component" value="Chromosome"/>
</dbReference>
<gene>
    <name type="ordered locus">MJ0347.1</name>
</gene>
<accession>P81307</accession>
<sequence>MKTIVIDKSMSVDIEYSINAIDQCNITSLKDLQIQPFDQCIILWNDKIIFRGYCIDARLSQSFGQQQYEYTINSPLWILSQQKTTAKTTFLQIFLKECCNLCNLELDYQLDSNPLIYIEESSYFDALKKCILYTKNYNTRFYVDYEYNSLIFTDKISGQHPKEEKVVGYEFEWDTEIINQVRW</sequence>
<feature type="chain" id="PRO_0000106818" description="Uncharacterized protein MJ0347.1">
    <location>
        <begin position="1"/>
        <end position="183"/>
    </location>
</feature>
<protein>
    <recommendedName>
        <fullName>Uncharacterized protein MJ0347.1</fullName>
    </recommendedName>
</protein>
<keyword id="KW-1185">Reference proteome</keyword>
<organism>
    <name type="scientific">Methanocaldococcus jannaschii (strain ATCC 43067 / DSM 2661 / JAL-1 / JCM 10045 / NBRC 100440)</name>
    <name type="common">Methanococcus jannaschii</name>
    <dbReference type="NCBI Taxonomy" id="243232"/>
    <lineage>
        <taxon>Archaea</taxon>
        <taxon>Methanobacteriati</taxon>
        <taxon>Methanobacteriota</taxon>
        <taxon>Methanomada group</taxon>
        <taxon>Methanococci</taxon>
        <taxon>Methanococcales</taxon>
        <taxon>Methanocaldococcaceae</taxon>
        <taxon>Methanocaldococcus</taxon>
    </lineage>
</organism>